<protein>
    <recommendedName>
        <fullName>Golgi SNAP receptor complex member 2</fullName>
    </recommendedName>
    <alternativeName>
        <fullName>27 kDa Golgi SNARE protein</fullName>
    </alternativeName>
    <alternativeName>
        <fullName>Membrin</fullName>
    </alternativeName>
</protein>
<comment type="function">
    <text evidence="5">Involved in transport of proteins from the cis/medial-Golgi to the trans-Golgi network.</text>
</comment>
<comment type="subunit">
    <text evidence="1 3 5 6">Part of a unique SNARE complex composed of the Golgi SNAREs GOSR1, STX5 and YKT6. Interacts with BET1 (By similarity).</text>
</comment>
<comment type="subcellular location">
    <subcellularLocation>
        <location evidence="4">Golgi apparatus</location>
        <location evidence="4">cis-Golgi network membrane</location>
        <topology evidence="2">Single-pass type IV membrane protein</topology>
    </subcellularLocation>
    <subcellularLocation>
        <location evidence="4">Golgi apparatus membrane</location>
    </subcellularLocation>
    <subcellularLocation>
        <location evidence="5">Endoplasmic reticulum membrane</location>
    </subcellularLocation>
    <text evidence="4">Concentrated most in the intermediate compartment/cis-Golgi network and the cis-Golgi cisternae 1 and 2. Greatly reduced in concentration at the trans end of the Golgi apparatus.</text>
</comment>
<comment type="similarity">
    <text evidence="7">Belongs to the GOSR2 family.</text>
</comment>
<dbReference type="EMBL" id="AF007549">
    <property type="protein sequence ID" value="AAB82652.1"/>
    <property type="molecule type" value="mRNA"/>
</dbReference>
<dbReference type="EMBL" id="U91539">
    <property type="protein sequence ID" value="AAC53131.1"/>
    <property type="molecule type" value="mRNA"/>
</dbReference>
<dbReference type="EMBL" id="BC061994">
    <property type="protein sequence ID" value="AAH61994.1"/>
    <property type="molecule type" value="mRNA"/>
</dbReference>
<dbReference type="RefSeq" id="NP_113873.1">
    <property type="nucleotide sequence ID" value="NM_031685.2"/>
</dbReference>
<dbReference type="SMR" id="O35165"/>
<dbReference type="CORUM" id="O35165"/>
<dbReference type="FunCoup" id="O35165">
    <property type="interactions" value="4081"/>
</dbReference>
<dbReference type="IntAct" id="O35165">
    <property type="interactions" value="4"/>
</dbReference>
<dbReference type="STRING" id="10116.ENSRNOP00000005046"/>
<dbReference type="PhosphoSitePlus" id="O35165"/>
<dbReference type="jPOST" id="O35165"/>
<dbReference type="PaxDb" id="10116-ENSRNOP00000005046"/>
<dbReference type="Ensembl" id="ENSRNOT00000114651.1">
    <property type="protein sequence ID" value="ENSRNOP00000084049.1"/>
    <property type="gene ID" value="ENSRNOG00000003506.6"/>
</dbReference>
<dbReference type="GeneID" id="64154"/>
<dbReference type="KEGG" id="rno:64154"/>
<dbReference type="AGR" id="RGD:62079"/>
<dbReference type="CTD" id="9570"/>
<dbReference type="RGD" id="62079">
    <property type="gene designation" value="Gosr2"/>
</dbReference>
<dbReference type="eggNOG" id="KOG3251">
    <property type="taxonomic scope" value="Eukaryota"/>
</dbReference>
<dbReference type="GeneTree" id="ENSGT00950000183192"/>
<dbReference type="HOGENOM" id="CLU_083740_0_1_1"/>
<dbReference type="InParanoid" id="O35165"/>
<dbReference type="OMA" id="LKYDSRH"/>
<dbReference type="OrthoDB" id="158360at2759"/>
<dbReference type="PhylomeDB" id="O35165"/>
<dbReference type="TreeFam" id="TF313702"/>
<dbReference type="Reactome" id="R-RNO-204005">
    <property type="pathway name" value="COPII-mediated vesicle transport"/>
</dbReference>
<dbReference type="Reactome" id="R-RNO-5694530">
    <property type="pathway name" value="Cargo concentration in the ER"/>
</dbReference>
<dbReference type="Reactome" id="R-RNO-6807878">
    <property type="pathway name" value="COPI-mediated anterograde transport"/>
</dbReference>
<dbReference type="Reactome" id="R-RNO-6811438">
    <property type="pathway name" value="Intra-Golgi traffic"/>
</dbReference>
<dbReference type="PRO" id="PR:O35165"/>
<dbReference type="Proteomes" id="UP000002494">
    <property type="component" value="Chromosome 10"/>
</dbReference>
<dbReference type="Bgee" id="ENSRNOG00000003506">
    <property type="expression patterns" value="Expressed in adult mammalian kidney and 19 other cell types or tissues"/>
</dbReference>
<dbReference type="GO" id="GO:0005789">
    <property type="term" value="C:endoplasmic reticulum membrane"/>
    <property type="evidence" value="ECO:0000266"/>
    <property type="project" value="RGD"/>
</dbReference>
<dbReference type="GO" id="GO:0012507">
    <property type="term" value="C:ER to Golgi transport vesicle membrane"/>
    <property type="evidence" value="ECO:0000318"/>
    <property type="project" value="GO_Central"/>
</dbReference>
<dbReference type="GO" id="GO:0005794">
    <property type="term" value="C:Golgi apparatus"/>
    <property type="evidence" value="ECO:0000266"/>
    <property type="project" value="RGD"/>
</dbReference>
<dbReference type="GO" id="GO:0000139">
    <property type="term" value="C:Golgi membrane"/>
    <property type="evidence" value="ECO:0000250"/>
    <property type="project" value="UniProtKB"/>
</dbReference>
<dbReference type="GO" id="GO:0031902">
    <property type="term" value="C:late endosome membrane"/>
    <property type="evidence" value="ECO:0000318"/>
    <property type="project" value="GO_Central"/>
</dbReference>
<dbReference type="GO" id="GO:0031201">
    <property type="term" value="C:SNARE complex"/>
    <property type="evidence" value="ECO:0000314"/>
    <property type="project" value="UniProtKB"/>
</dbReference>
<dbReference type="GO" id="GO:0005484">
    <property type="term" value="F:SNAP receptor activity"/>
    <property type="evidence" value="ECO:0000318"/>
    <property type="project" value="GO_Central"/>
</dbReference>
<dbReference type="GO" id="GO:0000149">
    <property type="term" value="F:SNARE binding"/>
    <property type="evidence" value="ECO:0000318"/>
    <property type="project" value="GO_Central"/>
</dbReference>
<dbReference type="GO" id="GO:0006891">
    <property type="term" value="P:intra-Golgi vesicle-mediated transport"/>
    <property type="evidence" value="ECO:0000250"/>
    <property type="project" value="UniProtKB"/>
</dbReference>
<dbReference type="GO" id="GO:0015031">
    <property type="term" value="P:protein transport"/>
    <property type="evidence" value="ECO:0007669"/>
    <property type="project" value="UniProtKB-KW"/>
</dbReference>
<dbReference type="GO" id="GO:0006906">
    <property type="term" value="P:vesicle fusion"/>
    <property type="evidence" value="ECO:0000318"/>
    <property type="project" value="GO_Central"/>
</dbReference>
<dbReference type="GO" id="GO:0016192">
    <property type="term" value="P:vesicle-mediated transport"/>
    <property type="evidence" value="ECO:0000266"/>
    <property type="project" value="RGD"/>
</dbReference>
<dbReference type="CDD" id="cd15863">
    <property type="entry name" value="SNARE_GS27"/>
    <property type="match status" value="1"/>
</dbReference>
<dbReference type="FunFam" id="1.20.5.110:FF:000044">
    <property type="entry name" value="Golgi SNAP receptor complex member 2"/>
    <property type="match status" value="1"/>
</dbReference>
<dbReference type="FunFam" id="1.20.58.400:FF:000004">
    <property type="entry name" value="Golgi SNAP receptor complex member 2 isoform X1"/>
    <property type="match status" value="1"/>
</dbReference>
<dbReference type="Gene3D" id="1.20.58.400">
    <property type="entry name" value="t-snare proteins"/>
    <property type="match status" value="1"/>
</dbReference>
<dbReference type="InterPro" id="IPR027027">
    <property type="entry name" value="GOSR2/Membrin/Bos1"/>
</dbReference>
<dbReference type="InterPro" id="IPR038407">
    <property type="entry name" value="v-SNARE_N_sf"/>
</dbReference>
<dbReference type="PANTHER" id="PTHR21230:SF1">
    <property type="entry name" value="GOLGI SNAP RECEPTOR COMPLEX MEMBER 2"/>
    <property type="match status" value="1"/>
</dbReference>
<dbReference type="PANTHER" id="PTHR21230">
    <property type="entry name" value="VESICLE TRANSPORT V-SNARE PROTEIN VTI1-RELATED"/>
    <property type="match status" value="1"/>
</dbReference>
<dbReference type="Pfam" id="PF12352">
    <property type="entry name" value="V-SNARE_C"/>
    <property type="match status" value="1"/>
</dbReference>
<dbReference type="PIRSF" id="PIRSF028865">
    <property type="entry name" value="Membrin-2"/>
    <property type="match status" value="1"/>
</dbReference>
<dbReference type="SUPFAM" id="SSF58038">
    <property type="entry name" value="SNARE fusion complex"/>
    <property type="match status" value="1"/>
</dbReference>
<proteinExistence type="evidence at protein level"/>
<reference key="1">
    <citation type="journal article" date="1997" name="Nature">
        <title>A SNARE involved in protein transport through the Golgi apparatus.</title>
        <authorList>
            <person name="Lowe S.L."/>
            <person name="Peter F."/>
            <person name="Subramaniam V.N."/>
            <person name="Wong S.H."/>
            <person name="Hong W."/>
        </authorList>
    </citation>
    <scope>NUCLEOTIDE SEQUENCE [MRNA]</scope>
    <scope>SUBUNIT</scope>
    <source>
        <tissue>Brain</tissue>
    </source>
</reference>
<reference key="2">
    <citation type="journal article" date="1997" name="Cell">
        <title>Protein interactions regulating vesicle transport between the endoplasmic reticulum and Golgi apparatus in mammalian cells.</title>
        <authorList>
            <person name="Hay J.C."/>
            <person name="Chao D.S."/>
            <person name="Kuo C.S."/>
            <person name="Scheller R.H."/>
        </authorList>
    </citation>
    <scope>NUCLEOTIDE SEQUENCE [MRNA]</scope>
    <scope>PROTEIN SEQUENCE OF 11-17; 100-107 AND 156-159</scope>
    <scope>FUNCTION</scope>
    <scope>SUBUNIT</scope>
    <scope>SUBCELLULAR LOCATION</scope>
    <source>
        <strain>Sprague-Dawley</strain>
        <tissue>Liver</tissue>
    </source>
</reference>
<reference key="3">
    <citation type="journal article" date="2004" name="Genome Res.">
        <title>The status, quality, and expansion of the NIH full-length cDNA project: the Mammalian Gene Collection (MGC).</title>
        <authorList>
            <consortium name="The MGC Project Team"/>
        </authorList>
    </citation>
    <scope>NUCLEOTIDE SEQUENCE [LARGE SCALE MRNA]</scope>
    <source>
        <tissue>Prostate</tissue>
    </source>
</reference>
<reference key="4">
    <citation type="journal article" date="2001" name="J. Biol. Chem.">
        <title>Ykt6 forms a SNARE complex with syntaxin 5, GS28, and Bet1 and participates in a late stage in endoplasmic reticulum-Golgi transport.</title>
        <authorList>
            <person name="Zhang T."/>
            <person name="Hong W."/>
        </authorList>
    </citation>
    <scope>INTERACTION WITH GOSR1; STX5 AND YKT6</scope>
</reference>
<reference key="5">
    <citation type="journal article" date="2004" name="Mol. Biol. Cell">
        <title>Countercurrent distribution of two distinct SNARE complexes mediating transport within the Golgi stack.</title>
        <authorList>
            <person name="Volchuk A."/>
            <person name="Ravazzola M."/>
            <person name="Perrelet A."/>
            <person name="Eng W.S."/>
            <person name="Di Liberto M."/>
            <person name="Varlamov O."/>
            <person name="Fukasawa M."/>
            <person name="Engel T."/>
            <person name="Sollner T.H."/>
            <person name="Rothman J.E."/>
            <person name="Orci L."/>
        </authorList>
    </citation>
    <scope>SUBCELLULAR LOCATION</scope>
</reference>
<gene>
    <name type="primary">Gosr2</name>
    <name type="synonym">Gs27</name>
</gene>
<feature type="chain" id="PRO_0000212551" description="Golgi SNAP receptor complex member 2">
    <location>
        <begin position="1"/>
        <end position="212"/>
    </location>
</feature>
<feature type="topological domain" description="Cytoplasmic" evidence="2">
    <location>
        <begin position="1"/>
        <end position="190"/>
    </location>
</feature>
<feature type="transmembrane region" description="Helical; Anchor for type IV membrane protein" evidence="2">
    <location>
        <begin position="191"/>
        <end position="211"/>
    </location>
</feature>
<feature type="topological domain" description="Vesicular" evidence="2">
    <location>
        <position position="212"/>
    </location>
</feature>
<feature type="coiled-coil region" evidence="2">
    <location>
        <begin position="61"/>
        <end position="107"/>
    </location>
</feature>
<feature type="short sequence motif" description="IxM motif; signal for cargo packaging into COPII-coated vesicles" evidence="1">
    <location>
        <begin position="118"/>
        <end position="120"/>
    </location>
</feature>
<feature type="modified residue" description="N-acetylmethionine" evidence="1">
    <location>
        <position position="1"/>
    </location>
</feature>
<feature type="sequence conflict" description="In Ref. 1; AAB82652." evidence="7" ref="1">
    <original>S</original>
    <variation>Y</variation>
    <location>
        <position position="114"/>
    </location>
</feature>
<feature type="sequence conflict" description="In Ref. 1; AAB82652." evidence="7" ref="1">
    <original>FQ</original>
    <variation>LE</variation>
    <location>
        <begin position="187"/>
        <end position="188"/>
    </location>
</feature>
<name>GOSR2_RAT</name>
<organism>
    <name type="scientific">Rattus norvegicus</name>
    <name type="common">Rat</name>
    <dbReference type="NCBI Taxonomy" id="10116"/>
    <lineage>
        <taxon>Eukaryota</taxon>
        <taxon>Metazoa</taxon>
        <taxon>Chordata</taxon>
        <taxon>Craniata</taxon>
        <taxon>Vertebrata</taxon>
        <taxon>Euteleostomi</taxon>
        <taxon>Mammalia</taxon>
        <taxon>Eutheria</taxon>
        <taxon>Euarchontoglires</taxon>
        <taxon>Glires</taxon>
        <taxon>Rodentia</taxon>
        <taxon>Myomorpha</taxon>
        <taxon>Muroidea</taxon>
        <taxon>Muridae</taxon>
        <taxon>Murinae</taxon>
        <taxon>Rattus</taxon>
    </lineage>
</organism>
<keyword id="KW-0007">Acetylation</keyword>
<keyword id="KW-0175">Coiled coil</keyword>
<keyword id="KW-0903">Direct protein sequencing</keyword>
<keyword id="KW-0256">Endoplasmic reticulum</keyword>
<keyword id="KW-0333">Golgi apparatus</keyword>
<keyword id="KW-0472">Membrane</keyword>
<keyword id="KW-0653">Protein transport</keyword>
<keyword id="KW-1185">Reference proteome</keyword>
<keyword id="KW-0812">Transmembrane</keyword>
<keyword id="KW-1133">Transmembrane helix</keyword>
<keyword id="KW-0813">Transport</keyword>
<accession>O35165</accession>
<accession>O08566</accession>
<accession>Q6GSW2</accession>
<evidence type="ECO:0000250" key="1">
    <source>
        <dbReference type="UniProtKB" id="O14653"/>
    </source>
</evidence>
<evidence type="ECO:0000255" key="2"/>
<evidence type="ECO:0000269" key="3">
    <source>
    </source>
</evidence>
<evidence type="ECO:0000269" key="4">
    <source>
    </source>
</evidence>
<evidence type="ECO:0000269" key="5">
    <source>
    </source>
</evidence>
<evidence type="ECO:0000269" key="6">
    <source>
    </source>
</evidence>
<evidence type="ECO:0000305" key="7"/>
<sequence>MEPLYQQTHKQVHEIQSHMGRLETADKQSVHLVENEIQASIDQIFSHLERLEILSSKEPPNRRQNAKLRVDQLKYDVQHLQTALRNFQHRRQAKEQQERQRDELLSRTFTTNDSDTTIPMDESLQFNSSLQNIHHGMDDLIGGGHSILEGLRAQRLTLKGTQKKILDIANMLGLSNTVMRLIEKRAFQDKYFMIGGMLLTCAVMFLVVQYLT</sequence>